<reference key="1">
    <citation type="journal article" date="2009" name="Stand. Genomic Sci.">
        <title>Complete genome sequence of Methanoculleus marisnigri Romesser et al. 1981 type strain JR1.</title>
        <authorList>
            <person name="Anderson I.J."/>
            <person name="Sieprawska-Lupa M."/>
            <person name="Lapidus A."/>
            <person name="Nolan M."/>
            <person name="Copeland A."/>
            <person name="Glavina Del Rio T."/>
            <person name="Tice H."/>
            <person name="Dalin E."/>
            <person name="Barry K."/>
            <person name="Saunders E."/>
            <person name="Han C."/>
            <person name="Brettin T."/>
            <person name="Detter J.C."/>
            <person name="Bruce D."/>
            <person name="Mikhailova N."/>
            <person name="Pitluck S."/>
            <person name="Hauser L."/>
            <person name="Land M."/>
            <person name="Lucas S."/>
            <person name="Richardson P."/>
            <person name="Whitman W.B."/>
            <person name="Kyrpides N.C."/>
        </authorList>
    </citation>
    <scope>NUCLEOTIDE SEQUENCE [LARGE SCALE GENOMIC DNA]</scope>
    <source>
        <strain>ATCC 35101 / DSM 1498 / JR1</strain>
    </source>
</reference>
<proteinExistence type="inferred from homology"/>
<sequence length="149" mass="16284">MDRTFVMVKPDGVQRGLVGEIVSRFEAKGLKLVGAKLELLPEGRVVEQYREHLEKPFFPGLKAYIMSGPCFLMAWEGKGVVAVVRRMVGATNPAEAAPGSIRGNFALDIGRNVIHASDSPESAARELGIHFAAGELVDYSRIDEPVLYE</sequence>
<accession>A3CTF1</accession>
<gene>
    <name evidence="1" type="primary">ndk</name>
    <name type="ordered locus">Memar_0718</name>
</gene>
<comment type="function">
    <text evidence="1">Major role in the synthesis of nucleoside triphosphates other than ATP. The ATP gamma phosphate is transferred to the NDP beta phosphate via a ping-pong mechanism, using a phosphorylated active-site intermediate.</text>
</comment>
<comment type="catalytic activity">
    <reaction evidence="1">
        <text>a 2'-deoxyribonucleoside 5'-diphosphate + ATP = a 2'-deoxyribonucleoside 5'-triphosphate + ADP</text>
        <dbReference type="Rhea" id="RHEA:44640"/>
        <dbReference type="ChEBI" id="CHEBI:30616"/>
        <dbReference type="ChEBI" id="CHEBI:61560"/>
        <dbReference type="ChEBI" id="CHEBI:73316"/>
        <dbReference type="ChEBI" id="CHEBI:456216"/>
        <dbReference type="EC" id="2.7.4.6"/>
    </reaction>
</comment>
<comment type="catalytic activity">
    <reaction evidence="1">
        <text>a ribonucleoside 5'-diphosphate + ATP = a ribonucleoside 5'-triphosphate + ADP</text>
        <dbReference type="Rhea" id="RHEA:18113"/>
        <dbReference type="ChEBI" id="CHEBI:30616"/>
        <dbReference type="ChEBI" id="CHEBI:57930"/>
        <dbReference type="ChEBI" id="CHEBI:61557"/>
        <dbReference type="ChEBI" id="CHEBI:456216"/>
        <dbReference type="EC" id="2.7.4.6"/>
    </reaction>
</comment>
<comment type="cofactor">
    <cofactor evidence="1">
        <name>Mg(2+)</name>
        <dbReference type="ChEBI" id="CHEBI:18420"/>
    </cofactor>
</comment>
<comment type="subcellular location">
    <subcellularLocation>
        <location evidence="1">Cytoplasm</location>
    </subcellularLocation>
</comment>
<comment type="similarity">
    <text evidence="1">Belongs to the NDK family.</text>
</comment>
<evidence type="ECO:0000255" key="1">
    <source>
        <dbReference type="HAMAP-Rule" id="MF_00451"/>
    </source>
</evidence>
<keyword id="KW-0067">ATP-binding</keyword>
<keyword id="KW-0963">Cytoplasm</keyword>
<keyword id="KW-0418">Kinase</keyword>
<keyword id="KW-0460">Magnesium</keyword>
<keyword id="KW-0479">Metal-binding</keyword>
<keyword id="KW-0546">Nucleotide metabolism</keyword>
<keyword id="KW-0547">Nucleotide-binding</keyword>
<keyword id="KW-0597">Phosphoprotein</keyword>
<keyword id="KW-0808">Transferase</keyword>
<organism>
    <name type="scientific">Methanoculleus marisnigri (strain ATCC 35101 / DSM 1498 / JR1)</name>
    <dbReference type="NCBI Taxonomy" id="368407"/>
    <lineage>
        <taxon>Archaea</taxon>
        <taxon>Methanobacteriati</taxon>
        <taxon>Methanobacteriota</taxon>
        <taxon>Stenosarchaea group</taxon>
        <taxon>Methanomicrobia</taxon>
        <taxon>Methanomicrobiales</taxon>
        <taxon>Methanomicrobiaceae</taxon>
        <taxon>Methanoculleus</taxon>
    </lineage>
</organism>
<feature type="chain" id="PRO_1000026251" description="Nucleoside diphosphate kinase">
    <location>
        <begin position="1"/>
        <end position="149"/>
    </location>
</feature>
<feature type="active site" description="Pros-phosphohistidine intermediate" evidence="1">
    <location>
        <position position="115"/>
    </location>
</feature>
<feature type="binding site" evidence="1">
    <location>
        <position position="9"/>
    </location>
    <ligand>
        <name>ATP</name>
        <dbReference type="ChEBI" id="CHEBI:30616"/>
    </ligand>
</feature>
<feature type="binding site" evidence="1">
    <location>
        <position position="57"/>
    </location>
    <ligand>
        <name>ATP</name>
        <dbReference type="ChEBI" id="CHEBI:30616"/>
    </ligand>
</feature>
<feature type="binding site" evidence="1">
    <location>
        <position position="85"/>
    </location>
    <ligand>
        <name>ATP</name>
        <dbReference type="ChEBI" id="CHEBI:30616"/>
    </ligand>
</feature>
<feature type="binding site" evidence="1">
    <location>
        <position position="91"/>
    </location>
    <ligand>
        <name>ATP</name>
        <dbReference type="ChEBI" id="CHEBI:30616"/>
    </ligand>
</feature>
<feature type="binding site" evidence="1">
    <location>
        <position position="102"/>
    </location>
    <ligand>
        <name>ATP</name>
        <dbReference type="ChEBI" id="CHEBI:30616"/>
    </ligand>
</feature>
<feature type="binding site" evidence="1">
    <location>
        <position position="112"/>
    </location>
    <ligand>
        <name>ATP</name>
        <dbReference type="ChEBI" id="CHEBI:30616"/>
    </ligand>
</feature>
<protein>
    <recommendedName>
        <fullName evidence="1">Nucleoside diphosphate kinase</fullName>
        <shortName evidence="1">NDK</shortName>
        <shortName evidence="1">NDP kinase</shortName>
        <ecNumber evidence="1">2.7.4.6</ecNumber>
    </recommendedName>
    <alternativeName>
        <fullName evidence="1">Nucleoside-2-P kinase</fullName>
    </alternativeName>
</protein>
<dbReference type="EC" id="2.7.4.6" evidence="1"/>
<dbReference type="EMBL" id="CP000562">
    <property type="protein sequence ID" value="ABN56651.1"/>
    <property type="molecule type" value="Genomic_DNA"/>
</dbReference>
<dbReference type="RefSeq" id="WP_011843562.1">
    <property type="nucleotide sequence ID" value="NC_009051.1"/>
</dbReference>
<dbReference type="SMR" id="A3CTF1"/>
<dbReference type="STRING" id="368407.Memar_0718"/>
<dbReference type="GeneID" id="4845900"/>
<dbReference type="GeneID" id="76731288"/>
<dbReference type="KEGG" id="mem:Memar_0718"/>
<dbReference type="eggNOG" id="arCOG04313">
    <property type="taxonomic scope" value="Archaea"/>
</dbReference>
<dbReference type="HOGENOM" id="CLU_060216_6_3_2"/>
<dbReference type="OrthoDB" id="6874at2157"/>
<dbReference type="Proteomes" id="UP000002146">
    <property type="component" value="Chromosome"/>
</dbReference>
<dbReference type="GO" id="GO:0005737">
    <property type="term" value="C:cytoplasm"/>
    <property type="evidence" value="ECO:0007669"/>
    <property type="project" value="UniProtKB-SubCell"/>
</dbReference>
<dbReference type="GO" id="GO:0005524">
    <property type="term" value="F:ATP binding"/>
    <property type="evidence" value="ECO:0007669"/>
    <property type="project" value="UniProtKB-UniRule"/>
</dbReference>
<dbReference type="GO" id="GO:0046872">
    <property type="term" value="F:metal ion binding"/>
    <property type="evidence" value="ECO:0007669"/>
    <property type="project" value="UniProtKB-KW"/>
</dbReference>
<dbReference type="GO" id="GO:0004550">
    <property type="term" value="F:nucleoside diphosphate kinase activity"/>
    <property type="evidence" value="ECO:0007669"/>
    <property type="project" value="UniProtKB-UniRule"/>
</dbReference>
<dbReference type="GO" id="GO:0006241">
    <property type="term" value="P:CTP biosynthetic process"/>
    <property type="evidence" value="ECO:0007669"/>
    <property type="project" value="UniProtKB-UniRule"/>
</dbReference>
<dbReference type="GO" id="GO:0006183">
    <property type="term" value="P:GTP biosynthetic process"/>
    <property type="evidence" value="ECO:0007669"/>
    <property type="project" value="UniProtKB-UniRule"/>
</dbReference>
<dbReference type="GO" id="GO:0006228">
    <property type="term" value="P:UTP biosynthetic process"/>
    <property type="evidence" value="ECO:0007669"/>
    <property type="project" value="UniProtKB-UniRule"/>
</dbReference>
<dbReference type="CDD" id="cd04413">
    <property type="entry name" value="NDPk_I"/>
    <property type="match status" value="1"/>
</dbReference>
<dbReference type="FunFam" id="3.30.70.141:FF:000002">
    <property type="entry name" value="Nucleoside diphosphate kinase"/>
    <property type="match status" value="1"/>
</dbReference>
<dbReference type="Gene3D" id="3.30.70.141">
    <property type="entry name" value="Nucleoside diphosphate kinase-like domain"/>
    <property type="match status" value="1"/>
</dbReference>
<dbReference type="HAMAP" id="MF_00451">
    <property type="entry name" value="NDP_kinase"/>
    <property type="match status" value="1"/>
</dbReference>
<dbReference type="InterPro" id="IPR034907">
    <property type="entry name" value="NDK-like_dom"/>
</dbReference>
<dbReference type="InterPro" id="IPR036850">
    <property type="entry name" value="NDK-like_dom_sf"/>
</dbReference>
<dbReference type="InterPro" id="IPR001564">
    <property type="entry name" value="Nucleoside_diP_kinase"/>
</dbReference>
<dbReference type="InterPro" id="IPR023005">
    <property type="entry name" value="Nucleoside_diP_kinase_AS"/>
</dbReference>
<dbReference type="NCBIfam" id="NF001908">
    <property type="entry name" value="PRK00668.1"/>
    <property type="match status" value="1"/>
</dbReference>
<dbReference type="PANTHER" id="PTHR11349">
    <property type="entry name" value="NUCLEOSIDE DIPHOSPHATE KINASE"/>
    <property type="match status" value="1"/>
</dbReference>
<dbReference type="Pfam" id="PF00334">
    <property type="entry name" value="NDK"/>
    <property type="match status" value="1"/>
</dbReference>
<dbReference type="PRINTS" id="PR01243">
    <property type="entry name" value="NUCDPKINASE"/>
</dbReference>
<dbReference type="SMART" id="SM00562">
    <property type="entry name" value="NDK"/>
    <property type="match status" value="1"/>
</dbReference>
<dbReference type="SUPFAM" id="SSF54919">
    <property type="entry name" value="Nucleoside diphosphate kinase, NDK"/>
    <property type="match status" value="1"/>
</dbReference>
<dbReference type="PROSITE" id="PS00469">
    <property type="entry name" value="NDPK"/>
    <property type="match status" value="1"/>
</dbReference>
<dbReference type="PROSITE" id="PS51374">
    <property type="entry name" value="NDPK_LIKE"/>
    <property type="match status" value="1"/>
</dbReference>
<name>NDK_METMJ</name>